<evidence type="ECO:0000255" key="1">
    <source>
        <dbReference type="PROSITE-ProRule" id="PRU01232"/>
    </source>
</evidence>
<evidence type="ECO:0000269" key="2">
    <source>
    </source>
</evidence>
<evidence type="ECO:0000269" key="3">
    <source>
    </source>
</evidence>
<evidence type="ECO:0000269" key="4">
    <source>
    </source>
</evidence>
<evidence type="ECO:0000269" key="5">
    <source>
    </source>
</evidence>
<evidence type="ECO:0000269" key="6">
    <source>
    </source>
</evidence>
<evidence type="ECO:0000269" key="7">
    <source>
    </source>
</evidence>
<evidence type="ECO:0000269" key="8">
    <source>
    </source>
</evidence>
<evidence type="ECO:0000269" key="9">
    <source>
    </source>
</evidence>
<evidence type="ECO:0000269" key="10">
    <source>
    </source>
</evidence>
<evidence type="ECO:0000303" key="11">
    <source>
    </source>
</evidence>
<evidence type="ECO:0000305" key="12">
    <source>
    </source>
</evidence>
<evidence type="ECO:0000305" key="13">
    <source>
    </source>
</evidence>
<evidence type="ECO:0000305" key="14">
    <source>
    </source>
</evidence>
<accession>Q9L1J9</accession>
<keyword id="KW-0034">Amyloid</keyword>
<keyword id="KW-0130">Cell adhesion</keyword>
<keyword id="KW-0134">Cell wall</keyword>
<keyword id="KW-1015">Disulfide bond</keyword>
<keyword id="KW-0281">Fimbrium</keyword>
<keyword id="KW-1185">Reference proteome</keyword>
<keyword id="KW-0964">Secreted</keyword>
<keyword id="KW-0732">Signal</keyword>
<feature type="signal peptide" evidence="2 3">
    <location>
        <begin position="1"/>
        <end position="23"/>
    </location>
</feature>
<feature type="chain" id="PRO_5004329893" description="Chaplin-D">
    <location>
        <begin position="24"/>
        <end position="75"/>
    </location>
</feature>
<feature type="domain" description="Chaplin" evidence="1">
    <location>
        <begin position="34"/>
        <end position="74"/>
    </location>
</feature>
<feature type="disulfide bond" evidence="13">
    <location>
        <begin position="54"/>
        <end position="72"/>
    </location>
</feature>
<reference key="1">
    <citation type="journal article" date="2002" name="Nature">
        <title>Complete genome sequence of the model actinomycete Streptomyces coelicolor A3(2).</title>
        <authorList>
            <person name="Bentley S.D."/>
            <person name="Chater K.F."/>
            <person name="Cerdeno-Tarraga A.-M."/>
            <person name="Challis G.L."/>
            <person name="Thomson N.R."/>
            <person name="James K.D."/>
            <person name="Harris D.E."/>
            <person name="Quail M.A."/>
            <person name="Kieser H."/>
            <person name="Harper D."/>
            <person name="Bateman A."/>
            <person name="Brown S."/>
            <person name="Chandra G."/>
            <person name="Chen C.W."/>
            <person name="Collins M."/>
            <person name="Cronin A."/>
            <person name="Fraser A."/>
            <person name="Goble A."/>
            <person name="Hidalgo J."/>
            <person name="Hornsby T."/>
            <person name="Howarth S."/>
            <person name="Huang C.-H."/>
            <person name="Kieser T."/>
            <person name="Larke L."/>
            <person name="Murphy L.D."/>
            <person name="Oliver K."/>
            <person name="O'Neil S."/>
            <person name="Rabbinowitsch E."/>
            <person name="Rajandream M.A."/>
            <person name="Rutherford K.M."/>
            <person name="Rutter S."/>
            <person name="Seeger K."/>
            <person name="Saunders D."/>
            <person name="Sharp S."/>
            <person name="Squares R."/>
            <person name="Squares S."/>
            <person name="Taylor K."/>
            <person name="Warren T."/>
            <person name="Wietzorrek A."/>
            <person name="Woodward J.R."/>
            <person name="Barrell B.G."/>
            <person name="Parkhill J."/>
            <person name="Hopwood D.A."/>
        </authorList>
    </citation>
    <scope>NUCLEOTIDE SEQUENCE [LARGE SCALE GENOMIC DNA]</scope>
    <source>
        <strain>ATCC BAA-471 / A3(2) / M145</strain>
    </source>
</reference>
<reference key="2">
    <citation type="journal article" date="2003" name="Genes Dev.">
        <title>A novel class of secreted hydrophobic proteins is involved in aerial hyphae formation in Streptomyces coelicolor by forming amyloid-like fibrils.</title>
        <authorList>
            <person name="Claessen D."/>
            <person name="Rink R."/>
            <person name="de Jong W."/>
            <person name="Siebring J."/>
            <person name="de Vreugd P."/>
            <person name="Boersma F.G."/>
            <person name="Dijkhuizen L."/>
            <person name="Wosten H.A."/>
        </authorList>
    </citation>
    <scope>FUNCTION</scope>
    <scope>AMYLOID FORMATION</scope>
    <scope>SUBCELLULAR LOCATION</scope>
    <scope>DEVELOPMENTAL STAGE</scope>
    <scope>INDUCTION</scope>
    <scope>MASS SPECTROMETRY</scope>
    <scope>DISRUPTION PHENOTYPE</scope>
    <source>
        <strain>ATCC BAA-471 / A3(2) / M145</strain>
    </source>
</reference>
<reference key="3">
    <citation type="journal article" date="2003" name="Genes Dev.">
        <title>The chaplins: a family of hydrophobic cell-surface proteins involved in aerial mycelium formation in Streptomyces coelicolor.</title>
        <authorList>
            <person name="Elliot M.A."/>
            <person name="Karoonuthaisiri N."/>
            <person name="Huang J."/>
            <person name="Bibb M.J."/>
            <person name="Cohen S.N."/>
            <person name="Kao C.M."/>
            <person name="Buttner M.J."/>
        </authorList>
    </citation>
    <scope>FUNCTION</scope>
    <scope>SUBCELLULAR LOCATION</scope>
    <scope>INDUCTION</scope>
    <scope>MASS SPECTROMETRY</scope>
    <scope>DISRUPTION PHENOTYPE</scope>
    <source>
        <strain>A3(2) / M600</strain>
    </source>
</reference>
<reference key="4">
    <citation type="journal article" date="2004" name="Mol. Microbiol.">
        <title>The formation of the rodlet layer of streptomycetes is the result of the interplay between rodlins and chaplins.</title>
        <authorList>
            <person name="Claessen D."/>
            <person name="Stokroos I."/>
            <person name="Deelstra H.J."/>
            <person name="Penninga N.A."/>
            <person name="Bormann C."/>
            <person name="Salas J.A."/>
            <person name="Dijkhuizen L."/>
            <person name="Woesten H.A."/>
        </authorList>
    </citation>
    <scope>FUNCTION</scope>
    <scope>DISRUPTION PHENOTYPE</scope>
    <source>
        <strain>ATCC BAA-471 / A3(2) / M145</strain>
    </source>
</reference>
<reference key="5">
    <citation type="journal article" date="2007" name="Mol. Microbiol.">
        <title>SapB and the chaplins: connections between morphogenetic proteins in Streptomyces coelicolor.</title>
        <authorList>
            <person name="Capstick D.S."/>
            <person name="Willey J.M."/>
            <person name="Buttner M.J."/>
            <person name="Elliot M.A."/>
        </authorList>
    </citation>
    <scope>FUNCTION</scope>
    <scope>SUBCELLULAR LOCATION</scope>
    <scope>DEVELOPMENTAL STAGE</scope>
    <scope>INDUCTION</scope>
    <scope>DISRUPTION PHENOTYPE</scope>
    <source>
        <strain>A3(2) / M600</strain>
    </source>
</reference>
<reference key="6">
    <citation type="journal article" date="2008" name="J. Bacteriol.">
        <title>Function and redundancy of the chaplin cell surface proteins in aerial hypha formation, rodlet assembly, and viability in Streptomyces coelicolor.</title>
        <authorList>
            <person name="Di Berardo C."/>
            <person name="Capstick D.S."/>
            <person name="Bibb M.J."/>
            <person name="Findlay K.C."/>
            <person name="Buttner M.J."/>
            <person name="Elliot M.A."/>
        </authorList>
    </citation>
    <scope>FUNCTION</scope>
    <scope>CREATION OF A MINIMAL CHAPLIN STRAIN</scope>
    <source>
        <strain>A3(2) / M600</strain>
    </source>
</reference>
<reference key="7">
    <citation type="journal article" date="2009" name="Mol. Microbiol.">
        <title>Attachment of Streptomyces coelicolor is mediated by amyloidal fimbriae that are anchored to the cell surface via cellulose.</title>
        <authorList>
            <person name="de Jong W."/>
            <person name="Woesten H.A."/>
            <person name="Dijkhuizen L."/>
            <person name="Claessen D."/>
        </authorList>
    </citation>
    <scope>FUNCTION IN GROWTH SUBSTRATE ATTACHMENT</scope>
    <scope>SUBCELLULAR LOCATION</scope>
    <scope>DISRUPTION PHENOTYPE</scope>
    <source>
        <strain>ATCC BAA-471 / A3(2) / M145</strain>
    </source>
</reference>
<reference key="8">
    <citation type="journal article" date="2011" name="PLoS ONE">
        <title>The assembly of individual chaplin peptides from Streptomyces coelicolor into functional amyloid fibrils.</title>
        <authorList>
            <person name="Sawyer E.B."/>
            <person name="Claessen D."/>
            <person name="Haas M."/>
            <person name="Hurgobin B."/>
            <person name="Gras S.L."/>
        </authorList>
    </citation>
    <scope>FUNCTION</scope>
    <scope>AMYLOID FORMATION</scope>
</reference>
<reference key="9">
    <citation type="journal article" date="2013" name="J. Struct. Biol.">
        <title>Chaplins of Streptomyces coelicolor self-assemble into two distinct functional amyloids.</title>
        <authorList>
            <person name="Bokhove M."/>
            <person name="Claessen D."/>
            <person name="de Jong W."/>
            <person name="Dijkhuizen L."/>
            <person name="Boekema E.J."/>
            <person name="Oostergetel G.T."/>
        </authorList>
    </citation>
    <scope>FUNCTION</scope>
    <scope>AMYLOID FORMATION</scope>
</reference>
<reference key="10">
    <citation type="journal article" date="2014" name="Appl. Microbiol. Biotechnol.">
        <title>Surface modification using interfacial assembly of the Streptomyces chaplin proteins.</title>
        <authorList>
            <person name="Ekkers D.M."/>
            <person name="Claessen D."/>
            <person name="Galli F."/>
            <person name="Stamhuis E."/>
        </authorList>
    </citation>
    <scope>BIOTECHNOLOGY</scope>
    <source>
        <strain>ATCC BAA-471 / A3(2) / M145</strain>
    </source>
</reference>
<organism>
    <name type="scientific">Streptomyces coelicolor (strain ATCC BAA-471 / A3(2) / M145)</name>
    <dbReference type="NCBI Taxonomy" id="100226"/>
    <lineage>
        <taxon>Bacteria</taxon>
        <taxon>Bacillati</taxon>
        <taxon>Actinomycetota</taxon>
        <taxon>Actinomycetes</taxon>
        <taxon>Kitasatosporales</taxon>
        <taxon>Streptomycetaceae</taxon>
        <taxon>Streptomyces</taxon>
        <taxon>Streptomyces albidoflavus group</taxon>
    </lineage>
</organism>
<protein>
    <recommendedName>
        <fullName evidence="11">Chaplin-D</fullName>
    </recommendedName>
</protein>
<gene>
    <name evidence="11" type="primary">chpD</name>
    <name type="ordered locus">SCO2717</name>
</gene>
<dbReference type="EMBL" id="AL939113">
    <property type="protein sequence ID" value="CAB75306.1"/>
    <property type="molecule type" value="Genomic_DNA"/>
</dbReference>
<dbReference type="RefSeq" id="NP_626950.1">
    <property type="nucleotide sequence ID" value="NC_003888.3"/>
</dbReference>
<dbReference type="RefSeq" id="WP_011028536.1">
    <property type="nucleotide sequence ID" value="NZ_VNID01000020.1"/>
</dbReference>
<dbReference type="STRING" id="100226.gene:17760324"/>
<dbReference type="PaxDb" id="100226-SCO2717"/>
<dbReference type="DNASU" id="1098151"/>
<dbReference type="GeneID" id="91386282"/>
<dbReference type="KEGG" id="sco:SCO2717"/>
<dbReference type="PATRIC" id="fig|100226.15.peg.2772"/>
<dbReference type="eggNOG" id="ENOG50348JU">
    <property type="taxonomic scope" value="Bacteria"/>
</dbReference>
<dbReference type="HOGENOM" id="CLU_145456_3_1_11"/>
<dbReference type="InParanoid" id="Q9L1J9"/>
<dbReference type="PhylomeDB" id="Q9L1J9"/>
<dbReference type="Proteomes" id="UP000001973">
    <property type="component" value="Chromosome"/>
</dbReference>
<dbReference type="GO" id="GO:0009986">
    <property type="term" value="C:cell surface"/>
    <property type="evidence" value="ECO:0007669"/>
    <property type="project" value="UniProtKB-SubCell"/>
</dbReference>
<dbReference type="GO" id="GO:0005576">
    <property type="term" value="C:extracellular region"/>
    <property type="evidence" value="ECO:0007669"/>
    <property type="project" value="UniProtKB-KW"/>
</dbReference>
<dbReference type="GO" id="GO:0009289">
    <property type="term" value="C:pilus"/>
    <property type="evidence" value="ECO:0007669"/>
    <property type="project" value="UniProtKB-SubCell"/>
</dbReference>
<dbReference type="GO" id="GO:0007155">
    <property type="term" value="P:cell adhesion"/>
    <property type="evidence" value="ECO:0007669"/>
    <property type="project" value="UniProtKB-KW"/>
</dbReference>
<dbReference type="InterPro" id="IPR005528">
    <property type="entry name" value="ChpA-H"/>
</dbReference>
<dbReference type="Pfam" id="PF03777">
    <property type="entry name" value="ChpA-C"/>
    <property type="match status" value="1"/>
</dbReference>
<dbReference type="PROSITE" id="PS51884">
    <property type="entry name" value="CHAPLIN"/>
    <property type="match status" value="1"/>
</dbReference>
<name>CHPD_STRCO</name>
<comment type="function">
    <text evidence="2 3 4 5 6 7 8 9">One of 8 partially redundant surface-active proteins required for efficient formation of aerial mycelium; the short chaplins assemble into a hydrophobic, amyloidal fibrillar surface layer that envelopes and protects aerial hyphae and spores, presumably anchored to the long chaplins (PubMed:12832396, PubMed:12832397, PubMed:15228525, PubMed:17462011). Chaplins have an overlapping function with the surface-active SapB peptide; chaplins are essential on minimal medium while on rich medium both chaplins and SapB are required for efficient aerial hyphae formation (PubMed:17462011). Chaplins are also involved in cell attachment to a hydrophobic surface (PubMed:19682261). Forms amyloid fibrils in vitro probably composed of stacked beta-sheets, at low extracellular concentrations individually restores the ability to form aerial hyphae to a chaplin-deficient strain (PubMed:21526199). A small chaplin extract (ChpD, ChpE, ChpF, ChpG and ChpH) self-assembles into 2 different amyloids; small fibrils at the air-water interface form an amphipathic membrane that resembles spore-surface structures involved in aerial hyphae formation, and hydrophilic fibrils in solution that resemble the fibers that attach cells to a hydrophobic surface. At the air-water interface the hydrophilic surface is in contact with water (probably equivalent to the peptidoglycan layer), while the hydrophobic face is exposed to the air, making the surface of the aerial hyphae hydrophobic (PubMed:24012833). A minimal chaplin strain capable of forming aerial mycelium/hyphae on minimal medium contains ChpC, ChpE and ChpH. The strain also has restored rodlet formation on the hyphae surface. A second minimal chaplin strain with ChpA, ChpD and ChpE makes slightly less robust hyphae (PubMed:18586935). A small chaplin extract applied to a chaplin-deficient strain restores aerial hyphae formation (PubMed:12832396, PubMed:12832397). The small chaplin extract forms an amyloid-like structure similar to that seen on the surface of cells without rodlets (rdlA-rdlB deletions), and is highly surface active, reducing surface tension from 72 to 26 mJ/m(2), which probably allows escape of hyphae from an aqueous environment into air (PubMed:12832396).</text>
</comment>
<comment type="subcellular location">
    <subcellularLocation>
        <location evidence="2 3 14">Cell surface</location>
    </subcellularLocation>
    <subcellularLocation>
        <location evidence="2 3">Secreted</location>
        <location evidence="2 3">Cell wall</location>
    </subcellularLocation>
    <subcellularLocation>
        <location evidence="7">Fimbrium</location>
    </subcellularLocation>
</comment>
<comment type="developmental stage">
    <text evidence="2 14">Present in aerial hyphae of sporulating cultures; it is probably directly underneath the rodlet layer formed by RdlA and RdlB (at protein level).</text>
</comment>
<comment type="induction">
    <text evidence="3 5 12">Not expressed while still submerged, accumulates during aerial hyphae formation on minimal medium, no transcript detected during sporulation (Probable). During aerial hyphae formation and early sporulation on rich medium, under control of ECF sigma factor BldN (PubMed:12832397). Expression depends on bldB but not bldA, bldD or bldH (at protein level) (PubMed:17462011).</text>
</comment>
<comment type="mass spectrometry"/>
<comment type="mass spectrometry"/>
<comment type="disruption phenotype">
    <text evidence="2 3 4 5 7">A double chpA-chpD knockout has no phenotype; a quadruple chpA-chpC-chpD-chpH knockout has delayed aerial hyphae formation and sporulation. A quintuple chpA-chpB-chpC-chpD-chpH knockout has a longer delay in aerial hyphae formation and an almost complete lack of sporulation. The quintuple knockout still expresses ChpE, ChpEF and ChpG (PubMed:12832397). Quintuple knockout chpA-chpB-chpC-chpD-chpH has strongly delayed aerial hyphae formation, makes many fewer aerial hyphae but no effect on viability of the spores produced. Further deletion of chpE leads to more severe effects, and on rich media few aerial hyphae are produced after prolonged growth. Those few hyphae do differentiate into spores and have a rodlet layer (PubMed:12832396). Deletion of all 8 chaplin genes on minimal medium leads to severely disrupted aerial hyphae that collapse on the colony surface and are not hydrophobic on minimal medium. A few spore chains can still be made, but they have neither rodlets or amyloid-like fibers. rdlA and rdlB mRNA are down-regulated (PubMed:15228525, PubMed:17462011). Deletion of all 8 chaplin genes on rich medium leads to a reduced abundance of aerial hyphae without rodlets and occasional spore chains on surface hyphae. A complete chaplin-negative plus ram-negative strain (deletion of ramR or the ramC-ramS-ramA-ramB operon) leads to the complete loss of robust aerial hyphae (PubMed:17462011). Deletion of all 8 chaplin genes significantly reduces cellular attachment to a hydrophobic substrate; thin fibrils instead of fimbrae are detected. The long chaplins (ChpA, ChpB and ChpC, as seen by near wild-type attachment of the hextuple chpA-chpB-chpC-chpD-chpE-chpH knockout) are not essential but may contribute to attachment (PubMed:19682261).</text>
</comment>
<comment type="biotechnology">
    <text evidence="10">The small chaplin mixture (a cell wall extract of an rdlA-rdlB knockout) forms a stable coat on a number of surfaces (including Teflon and cotton) and emulsifies oil-water mixtures, which could be useful in medical and technical applications.</text>
</comment>
<comment type="similarity">
    <text evidence="13">Belongs to the chaplin family. Short chaplin subfamily.</text>
</comment>
<sequence>MKKSAAVVAGAIMALGMAAPAFADAGAEGAAVGSPGVLSGNVIQVPVHVPVNVCGNSINVVGLLNPAFGNKCEND</sequence>
<proteinExistence type="evidence at protein level"/>